<organism>
    <name type="scientific">Pyropia haitanensis</name>
    <name type="common">Red seaweed</name>
    <name type="synonym">Porphyra haitanensis</name>
    <dbReference type="NCBI Taxonomy" id="1262161"/>
    <lineage>
        <taxon>Eukaryota</taxon>
        <taxon>Rhodophyta</taxon>
        <taxon>Bangiophyceae</taxon>
        <taxon>Bangiales</taxon>
        <taxon>Bangiaceae</taxon>
        <taxon>Pyropia</taxon>
    </lineage>
</organism>
<accession>Q760R4</accession>
<dbReference type="EMBL" id="AB118585">
    <property type="protein sequence ID" value="BAC84938.1"/>
    <property type="molecule type" value="Genomic_DNA"/>
</dbReference>
<dbReference type="RefSeq" id="YP_007947756.1">
    <property type="nucleotide sequence ID" value="NC_021189.1"/>
</dbReference>
<dbReference type="SMR" id="Q760R4"/>
<dbReference type="GeneID" id="15525244"/>
<dbReference type="GO" id="GO:0009507">
    <property type="term" value="C:chloroplast"/>
    <property type="evidence" value="ECO:0007669"/>
    <property type="project" value="UniProtKB-SubCell"/>
</dbReference>
<dbReference type="GO" id="GO:0016984">
    <property type="term" value="F:ribulose-bisphosphate carboxylase activity"/>
    <property type="evidence" value="ECO:0007669"/>
    <property type="project" value="UniProtKB-UniRule"/>
</dbReference>
<dbReference type="GO" id="GO:0019253">
    <property type="term" value="P:reductive pentose-phosphate cycle"/>
    <property type="evidence" value="ECO:0007669"/>
    <property type="project" value="UniProtKB-UniRule"/>
</dbReference>
<dbReference type="CDD" id="cd03527">
    <property type="entry name" value="RuBisCO_small"/>
    <property type="match status" value="1"/>
</dbReference>
<dbReference type="Gene3D" id="3.30.190.10">
    <property type="entry name" value="Ribulose bisphosphate carboxylase, small subunit"/>
    <property type="match status" value="1"/>
</dbReference>
<dbReference type="HAMAP" id="MF_00859">
    <property type="entry name" value="RuBisCO_S_bact"/>
    <property type="match status" value="1"/>
</dbReference>
<dbReference type="InterPro" id="IPR024681">
    <property type="entry name" value="RuBisCO_ssu"/>
</dbReference>
<dbReference type="InterPro" id="IPR000894">
    <property type="entry name" value="RuBisCO_ssu_dom"/>
</dbReference>
<dbReference type="InterPro" id="IPR036385">
    <property type="entry name" value="RuBisCO_ssu_sf"/>
</dbReference>
<dbReference type="PANTHER" id="PTHR31262">
    <property type="entry name" value="RIBULOSE BISPHOSPHATE CARBOXYLASE SMALL CHAIN 1, CHLOROPLASTIC"/>
    <property type="match status" value="1"/>
</dbReference>
<dbReference type="PANTHER" id="PTHR31262:SF23">
    <property type="entry name" value="RIBULOSE BISPHOSPHATE CARBOXYLASE SMALL SUBUNIT"/>
    <property type="match status" value="1"/>
</dbReference>
<dbReference type="Pfam" id="PF00101">
    <property type="entry name" value="RuBisCO_small"/>
    <property type="match status" value="1"/>
</dbReference>
<dbReference type="SMART" id="SM00961">
    <property type="entry name" value="RuBisCO_small"/>
    <property type="match status" value="1"/>
</dbReference>
<dbReference type="SUPFAM" id="SSF55239">
    <property type="entry name" value="RuBisCO, small subunit"/>
    <property type="match status" value="1"/>
</dbReference>
<gene>
    <name evidence="1" type="primary">rbcS</name>
</gene>
<sequence>MRVTQGTFSFLPDLTDEQINKQLAYIVSKGFSANVEYTDDPHPRNSYWELWGLPLFDVKDASAVMYEISSCRKAKPNYYIKVNAFDNTRGIESCVLSFIVNRPINEPGFLLQRQDFEGRTMKYSLHSYATEKPEGARY</sequence>
<feature type="chain" id="PRO_0000277261" description="Ribulose bisphosphate carboxylase small subunit">
    <location>
        <begin position="1"/>
        <end position="138"/>
    </location>
</feature>
<geneLocation type="chloroplast"/>
<comment type="function">
    <text evidence="1">RuBisCO catalyzes two reactions: the carboxylation of D-ribulose 1,5-bisphosphate, the primary event in carbon dioxide fixation, as well as the oxidative fragmentation of the pentose substrate in the photorespiration process. Both reactions occur simultaneously and in competition at the same active site. Although the small subunit is not catalytic it is essential for maximal activity.</text>
</comment>
<comment type="subunit">
    <text evidence="1">Heterohexadecamer of 8 large and 8 small subunits.</text>
</comment>
<comment type="subcellular location">
    <subcellularLocation>
        <location evidence="1">Plastid</location>
        <location evidence="1">Chloroplast</location>
    </subcellularLocation>
</comment>
<comment type="miscellaneous">
    <text>In this alga, in contrast to plants, the small subunit is encoded in the chloroplast.</text>
</comment>
<comment type="miscellaneous">
    <text evidence="1">The basic functional RuBisCO is composed of a large chain homodimer in a 'head-to-tail' conformation. In form I RuBisCO this homodimer is arranged in a barrel-like tetramer with the small subunits forming a tetrameric 'cap' on each end of the 'barrel'.</text>
</comment>
<comment type="similarity">
    <text evidence="1">Belongs to the RuBisCO small chain family.</text>
</comment>
<keyword id="KW-0113">Calvin cycle</keyword>
<keyword id="KW-0120">Carbon dioxide fixation</keyword>
<keyword id="KW-0150">Chloroplast</keyword>
<keyword id="KW-0601">Photorespiration</keyword>
<keyword id="KW-0602">Photosynthesis</keyword>
<keyword id="KW-0934">Plastid</keyword>
<reference key="1">
    <citation type="submission" date="2003-08" db="EMBL/GenBank/DDBJ databases">
        <title>Species determination utilizing Porphyra (Rhodophyta) plastid DNA RuBisCo sequences.</title>
        <authorList>
            <person name="Kito H."/>
            <person name="Kunimoto M."/>
            <person name="Mizukami Y."/>
            <person name="Murase N."/>
            <person name="Kuroki T."/>
            <person name="Taruta M."/>
            <person name="Levine I."/>
        </authorList>
    </citation>
    <scope>NUCLEOTIDE SEQUENCE [GENOMIC DNA]</scope>
    <source>
        <tissue>Thallus</tissue>
    </source>
</reference>
<evidence type="ECO:0000255" key="1">
    <source>
        <dbReference type="HAMAP-Rule" id="MF_00859"/>
    </source>
</evidence>
<name>RBS_PYRHA</name>
<proteinExistence type="inferred from homology"/>
<protein>
    <recommendedName>
        <fullName evidence="1">Ribulose bisphosphate carboxylase small subunit</fullName>
        <shortName evidence="1">RuBisCO small subunit</shortName>
    </recommendedName>
</protein>